<dbReference type="EC" id="2.3.1.16" evidence="1"/>
<dbReference type="EMBL" id="CP001127">
    <property type="protein sequence ID" value="ACF90685.1"/>
    <property type="molecule type" value="Genomic_DNA"/>
</dbReference>
<dbReference type="RefSeq" id="WP_001248130.1">
    <property type="nucleotide sequence ID" value="NC_011094.1"/>
</dbReference>
<dbReference type="SMR" id="B4TQC3"/>
<dbReference type="KEGG" id="sew:SeSA_A2618"/>
<dbReference type="HOGENOM" id="CLU_031026_2_0_6"/>
<dbReference type="UniPathway" id="UPA00659"/>
<dbReference type="Proteomes" id="UP000001865">
    <property type="component" value="Chromosome"/>
</dbReference>
<dbReference type="GO" id="GO:0005829">
    <property type="term" value="C:cytosol"/>
    <property type="evidence" value="ECO:0007669"/>
    <property type="project" value="TreeGrafter"/>
</dbReference>
<dbReference type="GO" id="GO:0003988">
    <property type="term" value="F:acetyl-CoA C-acyltransferase activity"/>
    <property type="evidence" value="ECO:0007669"/>
    <property type="project" value="UniProtKB-UniRule"/>
</dbReference>
<dbReference type="GO" id="GO:0006635">
    <property type="term" value="P:fatty acid beta-oxidation"/>
    <property type="evidence" value="ECO:0007669"/>
    <property type="project" value="UniProtKB-UniRule"/>
</dbReference>
<dbReference type="CDD" id="cd00751">
    <property type="entry name" value="thiolase"/>
    <property type="match status" value="1"/>
</dbReference>
<dbReference type="FunFam" id="3.40.47.10:FF:000011">
    <property type="entry name" value="3-ketoacyl-CoA thiolase"/>
    <property type="match status" value="1"/>
</dbReference>
<dbReference type="Gene3D" id="3.40.47.10">
    <property type="match status" value="1"/>
</dbReference>
<dbReference type="HAMAP" id="MF_01618">
    <property type="entry name" value="FadI"/>
    <property type="match status" value="1"/>
</dbReference>
<dbReference type="InterPro" id="IPR012806">
    <property type="entry name" value="Ac-CoA_C-AcTrfase_FadI"/>
</dbReference>
<dbReference type="InterPro" id="IPR002155">
    <property type="entry name" value="Thiolase"/>
</dbReference>
<dbReference type="InterPro" id="IPR016039">
    <property type="entry name" value="Thiolase-like"/>
</dbReference>
<dbReference type="InterPro" id="IPR020615">
    <property type="entry name" value="Thiolase_acyl_enz_int_AS"/>
</dbReference>
<dbReference type="InterPro" id="IPR020610">
    <property type="entry name" value="Thiolase_AS"/>
</dbReference>
<dbReference type="InterPro" id="IPR020617">
    <property type="entry name" value="Thiolase_C"/>
</dbReference>
<dbReference type="InterPro" id="IPR020613">
    <property type="entry name" value="Thiolase_CS"/>
</dbReference>
<dbReference type="InterPro" id="IPR020616">
    <property type="entry name" value="Thiolase_N"/>
</dbReference>
<dbReference type="NCBIfam" id="TIGR01930">
    <property type="entry name" value="AcCoA-C-Actrans"/>
    <property type="match status" value="1"/>
</dbReference>
<dbReference type="NCBIfam" id="TIGR02446">
    <property type="entry name" value="FadI"/>
    <property type="match status" value="1"/>
</dbReference>
<dbReference type="NCBIfam" id="NF006516">
    <property type="entry name" value="PRK08963.1"/>
    <property type="match status" value="1"/>
</dbReference>
<dbReference type="PANTHER" id="PTHR18919:SF107">
    <property type="entry name" value="ACETYL-COA ACETYLTRANSFERASE, CYTOSOLIC"/>
    <property type="match status" value="1"/>
</dbReference>
<dbReference type="PANTHER" id="PTHR18919">
    <property type="entry name" value="ACETYL-COA C-ACYLTRANSFERASE"/>
    <property type="match status" value="1"/>
</dbReference>
<dbReference type="Pfam" id="PF02803">
    <property type="entry name" value="Thiolase_C"/>
    <property type="match status" value="1"/>
</dbReference>
<dbReference type="Pfam" id="PF00108">
    <property type="entry name" value="Thiolase_N"/>
    <property type="match status" value="1"/>
</dbReference>
<dbReference type="PIRSF" id="PIRSF000429">
    <property type="entry name" value="Ac-CoA_Ac_transf"/>
    <property type="match status" value="1"/>
</dbReference>
<dbReference type="SUPFAM" id="SSF53901">
    <property type="entry name" value="Thiolase-like"/>
    <property type="match status" value="2"/>
</dbReference>
<dbReference type="PROSITE" id="PS00098">
    <property type="entry name" value="THIOLASE_1"/>
    <property type="match status" value="1"/>
</dbReference>
<dbReference type="PROSITE" id="PS00737">
    <property type="entry name" value="THIOLASE_2"/>
    <property type="match status" value="1"/>
</dbReference>
<dbReference type="PROSITE" id="PS00099">
    <property type="entry name" value="THIOLASE_3"/>
    <property type="match status" value="1"/>
</dbReference>
<keyword id="KW-0012">Acyltransferase</keyword>
<keyword id="KW-0963">Cytoplasm</keyword>
<keyword id="KW-0276">Fatty acid metabolism</keyword>
<keyword id="KW-0442">Lipid degradation</keyword>
<keyword id="KW-0443">Lipid metabolism</keyword>
<keyword id="KW-0808">Transferase</keyword>
<proteinExistence type="inferred from homology"/>
<sequence length="436" mass="46507">MRQALPLVTRQGDRIAIVSGLRTPFARQATAFHGIPAVDLGKMVVGELLARSEIPADAIEQLVFGQVVQMPEAPNIAREIVLGTGMNVHTDAYSVSRACATSFQAVANVAESLMAGTIRAGIAGGADSSSVLPIGVSKALARVLVDVNKARTTRQRLTLFSRLRLRDLLPVPPAVAEYSTGLRMGDTAEQMAKTYGITREQQDALAHRSHQRAAQAWAEGKLAEEVMTTYVPPYKNPFAEDNNIRGTSTLADYAKLRPAFDRKHGSVTAANSTPLTDGAAAVILMTESRAKELGLHPLGYLRSYAFTAIDVWQDMLLGPAWSTPLALERAGLTMADLTLFDMHEAFAAQTLANLQLLGSERFAREVLGRAQATGEVDDAKFNVLGGSIAYGHPFAATGARMITQTLHELRRRGGGFGLVTACAAGGLGAAMVLEAE</sequence>
<comment type="function">
    <text evidence="1">Catalyzes the final step of fatty acid oxidation in which acetyl-CoA is released and the CoA ester of a fatty acid two carbons shorter is formed.</text>
</comment>
<comment type="catalytic activity">
    <reaction evidence="1">
        <text>an acyl-CoA + acetyl-CoA = a 3-oxoacyl-CoA + CoA</text>
        <dbReference type="Rhea" id="RHEA:21564"/>
        <dbReference type="ChEBI" id="CHEBI:57287"/>
        <dbReference type="ChEBI" id="CHEBI:57288"/>
        <dbReference type="ChEBI" id="CHEBI:58342"/>
        <dbReference type="ChEBI" id="CHEBI:90726"/>
        <dbReference type="EC" id="2.3.1.16"/>
    </reaction>
</comment>
<comment type="pathway">
    <text evidence="1">Lipid metabolism; fatty acid beta-oxidation.</text>
</comment>
<comment type="subunit">
    <text evidence="1">Heterotetramer of two alpha chains (FadJ) and two beta chains (FadI).</text>
</comment>
<comment type="subcellular location">
    <subcellularLocation>
        <location evidence="1">Cytoplasm</location>
    </subcellularLocation>
</comment>
<comment type="similarity">
    <text evidence="1">Belongs to the thiolase-like superfamily. Thiolase family.</text>
</comment>
<evidence type="ECO:0000255" key="1">
    <source>
        <dbReference type="HAMAP-Rule" id="MF_01618"/>
    </source>
</evidence>
<organism>
    <name type="scientific">Salmonella schwarzengrund (strain CVM19633)</name>
    <dbReference type="NCBI Taxonomy" id="439843"/>
    <lineage>
        <taxon>Bacteria</taxon>
        <taxon>Pseudomonadati</taxon>
        <taxon>Pseudomonadota</taxon>
        <taxon>Gammaproteobacteria</taxon>
        <taxon>Enterobacterales</taxon>
        <taxon>Enterobacteriaceae</taxon>
        <taxon>Salmonella</taxon>
    </lineage>
</organism>
<accession>B4TQC3</accession>
<name>FADI_SALSV</name>
<gene>
    <name evidence="1" type="primary">fadI</name>
    <name type="ordered locus">SeSA_A2618</name>
</gene>
<feature type="chain" id="PRO_1000185978" description="3-ketoacyl-CoA thiolase">
    <location>
        <begin position="1"/>
        <end position="436"/>
    </location>
</feature>
<feature type="active site" description="Acyl-thioester intermediate" evidence="1">
    <location>
        <position position="99"/>
    </location>
</feature>
<feature type="active site" description="Proton acceptor" evidence="1">
    <location>
        <position position="392"/>
    </location>
</feature>
<feature type="active site" description="Proton acceptor" evidence="1">
    <location>
        <position position="422"/>
    </location>
</feature>
<reference key="1">
    <citation type="journal article" date="2011" name="J. Bacteriol.">
        <title>Comparative genomics of 28 Salmonella enterica isolates: evidence for CRISPR-mediated adaptive sublineage evolution.</title>
        <authorList>
            <person name="Fricke W.F."/>
            <person name="Mammel M.K."/>
            <person name="McDermott P.F."/>
            <person name="Tartera C."/>
            <person name="White D.G."/>
            <person name="Leclerc J.E."/>
            <person name="Ravel J."/>
            <person name="Cebula T.A."/>
        </authorList>
    </citation>
    <scope>NUCLEOTIDE SEQUENCE [LARGE SCALE GENOMIC DNA]</scope>
    <source>
        <strain>CVM19633</strain>
    </source>
</reference>
<protein>
    <recommendedName>
        <fullName evidence="1">3-ketoacyl-CoA thiolase</fullName>
        <ecNumber evidence="1">2.3.1.16</ecNumber>
    </recommendedName>
    <alternativeName>
        <fullName evidence="1">ACSs</fullName>
    </alternativeName>
    <alternativeName>
        <fullName evidence="1">Acetyl-CoA acyltransferase</fullName>
    </alternativeName>
    <alternativeName>
        <fullName evidence="1">Acyl-CoA ligase</fullName>
    </alternativeName>
    <alternativeName>
        <fullName evidence="1">Beta-ketothiolase</fullName>
    </alternativeName>
    <alternativeName>
        <fullName evidence="1">Fatty acid oxidation complex subunit beta</fullName>
    </alternativeName>
</protein>